<accession>A6TI00</accession>
<evidence type="ECO:0000255" key="1">
    <source>
        <dbReference type="HAMAP-Rule" id="MF_01602"/>
    </source>
</evidence>
<evidence type="ECO:0000255" key="2">
    <source>
        <dbReference type="PROSITE-ProRule" id="PRU01067"/>
    </source>
</evidence>
<feature type="chain" id="PRO_1000069384" description="Lipoate-protein ligase A">
    <location>
        <begin position="1"/>
        <end position="338"/>
    </location>
</feature>
<feature type="domain" description="BPL/LPL catalytic" evidence="2">
    <location>
        <begin position="29"/>
        <end position="216"/>
    </location>
</feature>
<feature type="binding site" evidence="1">
    <location>
        <position position="71"/>
    </location>
    <ligand>
        <name>ATP</name>
        <dbReference type="ChEBI" id="CHEBI:30616"/>
    </ligand>
</feature>
<feature type="binding site" evidence="1">
    <location>
        <begin position="76"/>
        <end position="79"/>
    </location>
    <ligand>
        <name>ATP</name>
        <dbReference type="ChEBI" id="CHEBI:30616"/>
    </ligand>
</feature>
<feature type="binding site" evidence="1">
    <location>
        <position position="134"/>
    </location>
    <ligand>
        <name>(R)-lipoate</name>
        <dbReference type="ChEBI" id="CHEBI:83088"/>
    </ligand>
</feature>
<feature type="binding site" evidence="1">
    <location>
        <position position="134"/>
    </location>
    <ligand>
        <name>ATP</name>
        <dbReference type="ChEBI" id="CHEBI:30616"/>
    </ligand>
</feature>
<organism>
    <name type="scientific">Klebsiella pneumoniae subsp. pneumoniae (strain ATCC 700721 / MGH 78578)</name>
    <dbReference type="NCBI Taxonomy" id="272620"/>
    <lineage>
        <taxon>Bacteria</taxon>
        <taxon>Pseudomonadati</taxon>
        <taxon>Pseudomonadota</taxon>
        <taxon>Gammaproteobacteria</taxon>
        <taxon>Enterobacterales</taxon>
        <taxon>Enterobacteriaceae</taxon>
        <taxon>Klebsiella/Raoultella group</taxon>
        <taxon>Klebsiella</taxon>
        <taxon>Klebsiella pneumoniae complex</taxon>
    </lineage>
</organism>
<dbReference type="EC" id="6.3.1.20" evidence="1"/>
<dbReference type="EMBL" id="CP000647">
    <property type="protein sequence ID" value="ABR80184.1"/>
    <property type="molecule type" value="Genomic_DNA"/>
</dbReference>
<dbReference type="RefSeq" id="WP_002887791.1">
    <property type="nucleotide sequence ID" value="NC_009648.1"/>
</dbReference>
<dbReference type="SMR" id="A6TI00"/>
<dbReference type="STRING" id="272620.KPN_04841"/>
<dbReference type="PaxDb" id="272620-KPN_04841"/>
<dbReference type="EnsemblBacteria" id="ABR80184">
    <property type="protein sequence ID" value="ABR80184"/>
    <property type="gene ID" value="KPN_04841"/>
</dbReference>
<dbReference type="KEGG" id="kpn:KPN_04841"/>
<dbReference type="HOGENOM" id="CLU_022986_0_1_6"/>
<dbReference type="UniPathway" id="UPA00537">
    <property type="reaction ID" value="UER00594"/>
</dbReference>
<dbReference type="UniPathway" id="UPA00537">
    <property type="reaction ID" value="UER00595"/>
</dbReference>
<dbReference type="Proteomes" id="UP000000265">
    <property type="component" value="Chromosome"/>
</dbReference>
<dbReference type="GO" id="GO:0005829">
    <property type="term" value="C:cytosol"/>
    <property type="evidence" value="ECO:0007669"/>
    <property type="project" value="TreeGrafter"/>
</dbReference>
<dbReference type="GO" id="GO:0005524">
    <property type="term" value="F:ATP binding"/>
    <property type="evidence" value="ECO:0007669"/>
    <property type="project" value="UniProtKB-KW"/>
</dbReference>
<dbReference type="GO" id="GO:0016979">
    <property type="term" value="F:lipoate-protein ligase activity"/>
    <property type="evidence" value="ECO:0007669"/>
    <property type="project" value="UniProtKB-UniRule"/>
</dbReference>
<dbReference type="GO" id="GO:0017118">
    <property type="term" value="F:lipoyltransferase activity"/>
    <property type="evidence" value="ECO:0007669"/>
    <property type="project" value="TreeGrafter"/>
</dbReference>
<dbReference type="GO" id="GO:0036211">
    <property type="term" value="P:protein modification process"/>
    <property type="evidence" value="ECO:0007669"/>
    <property type="project" value="InterPro"/>
</dbReference>
<dbReference type="CDD" id="cd16443">
    <property type="entry name" value="LplA"/>
    <property type="match status" value="1"/>
</dbReference>
<dbReference type="FunFam" id="3.30.930.10:FF:000024">
    <property type="entry name" value="Lipoate-protein ligase A"/>
    <property type="match status" value="1"/>
</dbReference>
<dbReference type="Gene3D" id="3.30.930.10">
    <property type="entry name" value="Bira Bifunctional Protein, Domain 2"/>
    <property type="match status" value="1"/>
</dbReference>
<dbReference type="Gene3D" id="3.30.390.50">
    <property type="entry name" value="CO dehydrogenase flavoprotein, C-terminal domain"/>
    <property type="match status" value="1"/>
</dbReference>
<dbReference type="HAMAP" id="MF_01602">
    <property type="entry name" value="LplA"/>
    <property type="match status" value="1"/>
</dbReference>
<dbReference type="InterPro" id="IPR045864">
    <property type="entry name" value="aa-tRNA-synth_II/BPL/LPL"/>
</dbReference>
<dbReference type="InterPro" id="IPR004143">
    <property type="entry name" value="BPL_LPL_catalytic"/>
</dbReference>
<dbReference type="InterPro" id="IPR023741">
    <property type="entry name" value="Lipoate_ligase_A"/>
</dbReference>
<dbReference type="InterPro" id="IPR019491">
    <property type="entry name" value="Lipoate_protein_ligase_C"/>
</dbReference>
<dbReference type="InterPro" id="IPR004562">
    <property type="entry name" value="LipoylTrfase_LipoateP_Ligase"/>
</dbReference>
<dbReference type="NCBIfam" id="TIGR00545">
    <property type="entry name" value="lipoyltrans"/>
    <property type="match status" value="1"/>
</dbReference>
<dbReference type="PANTHER" id="PTHR12561">
    <property type="entry name" value="LIPOATE-PROTEIN LIGASE"/>
    <property type="match status" value="1"/>
</dbReference>
<dbReference type="PANTHER" id="PTHR12561:SF3">
    <property type="entry name" value="LIPOYLTRANSFERASE 1, MITOCHONDRIAL"/>
    <property type="match status" value="1"/>
</dbReference>
<dbReference type="Pfam" id="PF10437">
    <property type="entry name" value="Lip_prot_lig_C"/>
    <property type="match status" value="1"/>
</dbReference>
<dbReference type="Pfam" id="PF21948">
    <property type="entry name" value="LplA-B_cat"/>
    <property type="match status" value="1"/>
</dbReference>
<dbReference type="SUPFAM" id="SSF55681">
    <property type="entry name" value="Class II aaRS and biotin synthetases"/>
    <property type="match status" value="1"/>
</dbReference>
<dbReference type="SUPFAM" id="SSF82649">
    <property type="entry name" value="SufE/NifU"/>
    <property type="match status" value="1"/>
</dbReference>
<dbReference type="PROSITE" id="PS51733">
    <property type="entry name" value="BPL_LPL_CATALYTIC"/>
    <property type="match status" value="1"/>
</dbReference>
<name>LPLA_KLEP7</name>
<proteinExistence type="inferred from homology"/>
<gene>
    <name evidence="1" type="primary">lplA</name>
    <name type="ordered locus">KPN78578_47600</name>
    <name type="ORF">KPN_04841</name>
</gene>
<protein>
    <recommendedName>
        <fullName evidence="1">Lipoate-protein ligase A</fullName>
        <ecNumber evidence="1">6.3.1.20</ecNumber>
    </recommendedName>
    <alternativeName>
        <fullName evidence="1">Lipoate--protein ligase</fullName>
    </alternativeName>
</protein>
<sequence length="338" mass="37727">MSTLRLLLSDSYDPWFNLAVEECIFRQMPATQRVLFLWRNADTVVIGRAQNPWKECNTRRMEEDHVRLARRSSGGGAVFHDLGNTCFTFMAGKPEYDKTVSTAIVLAALNSLGVTAEASGRNDLVVKTDSGDRKVSGSAYRETMDRGFHHGTLLLNADLSRLANYLNPDQKKLQAKGITSVRGRVANLVELLPGITHQQVCEAIQEAFFSHYGERVDAEVISPDNTPDLPNFAETFARQSSWEWNFGQAPAFSHLLDERFRWGGVELHFDVEKGHITRAQAFTDSLNPAPLEALAARLVGCQYRAEVLQQQCEALVGDFPEQEAELKELSAWIAGAVR</sequence>
<comment type="function">
    <text evidence="1">Catalyzes both the ATP-dependent activation of exogenously supplied lipoate to lipoyl-AMP and the transfer of the activated lipoyl onto the lipoyl domains of lipoate-dependent enzymes.</text>
</comment>
<comment type="catalytic activity">
    <reaction evidence="1">
        <text>L-lysyl-[lipoyl-carrier protein] + (R)-lipoate + ATP = N(6)-[(R)-lipoyl]-L-lysyl-[lipoyl-carrier protein] + AMP + diphosphate + H(+)</text>
        <dbReference type="Rhea" id="RHEA:49288"/>
        <dbReference type="Rhea" id="RHEA-COMP:10500"/>
        <dbReference type="Rhea" id="RHEA-COMP:10502"/>
        <dbReference type="ChEBI" id="CHEBI:15378"/>
        <dbReference type="ChEBI" id="CHEBI:29969"/>
        <dbReference type="ChEBI" id="CHEBI:30616"/>
        <dbReference type="ChEBI" id="CHEBI:33019"/>
        <dbReference type="ChEBI" id="CHEBI:83088"/>
        <dbReference type="ChEBI" id="CHEBI:83099"/>
        <dbReference type="ChEBI" id="CHEBI:456215"/>
        <dbReference type="EC" id="6.3.1.20"/>
    </reaction>
</comment>
<comment type="pathway">
    <text evidence="1">Protein modification; protein lipoylation via exogenous pathway; protein N(6)-(lipoyl)lysine from lipoate: step 1/2.</text>
</comment>
<comment type="pathway">
    <text evidence="1">Protein modification; protein lipoylation via exogenous pathway; protein N(6)-(lipoyl)lysine from lipoate: step 2/2.</text>
</comment>
<comment type="subunit">
    <text evidence="1">Monomer.</text>
</comment>
<comment type="subcellular location">
    <subcellularLocation>
        <location evidence="1">Cytoplasm</location>
    </subcellularLocation>
</comment>
<comment type="miscellaneous">
    <text evidence="1">In the transfer reaction, the free carboxyl group of lipoic acid is attached via an amide linkage to the epsilon-amino group of a specific lysine residue of lipoyl domains of lipoate-dependent enzymes.</text>
</comment>
<comment type="similarity">
    <text evidence="1">Belongs to the LplA family.</text>
</comment>
<reference key="1">
    <citation type="submission" date="2006-09" db="EMBL/GenBank/DDBJ databases">
        <authorList>
            <consortium name="The Klebsiella pneumonia Genome Sequencing Project"/>
            <person name="McClelland M."/>
            <person name="Sanderson E.K."/>
            <person name="Spieth J."/>
            <person name="Clifton W.S."/>
            <person name="Latreille P."/>
            <person name="Sabo A."/>
            <person name="Pepin K."/>
            <person name="Bhonagiri V."/>
            <person name="Porwollik S."/>
            <person name="Ali J."/>
            <person name="Wilson R.K."/>
        </authorList>
    </citation>
    <scope>NUCLEOTIDE SEQUENCE [LARGE SCALE GENOMIC DNA]</scope>
    <source>
        <strain>ATCC 700721 / MGH 78578</strain>
    </source>
</reference>
<keyword id="KW-0067">ATP-binding</keyword>
<keyword id="KW-0963">Cytoplasm</keyword>
<keyword id="KW-0436">Ligase</keyword>
<keyword id="KW-0547">Nucleotide-binding</keyword>